<feature type="chain" id="PRO_1000193069" description="Dihydroorotase">
    <location>
        <begin position="1"/>
        <end position="348"/>
    </location>
</feature>
<feature type="active site" evidence="1">
    <location>
        <position position="251"/>
    </location>
</feature>
<feature type="binding site" evidence="1">
    <location>
        <position position="17"/>
    </location>
    <ligand>
        <name>Zn(2+)</name>
        <dbReference type="ChEBI" id="CHEBI:29105"/>
        <label>1</label>
    </ligand>
</feature>
<feature type="binding site" evidence="1">
    <location>
        <begin position="19"/>
        <end position="21"/>
    </location>
    <ligand>
        <name>substrate</name>
    </ligand>
</feature>
<feature type="binding site" evidence="1">
    <location>
        <position position="19"/>
    </location>
    <ligand>
        <name>Zn(2+)</name>
        <dbReference type="ChEBI" id="CHEBI:29105"/>
        <label>1</label>
    </ligand>
</feature>
<feature type="binding site" evidence="1">
    <location>
        <position position="45"/>
    </location>
    <ligand>
        <name>substrate</name>
    </ligand>
</feature>
<feature type="binding site" description="via carbamate group" evidence="1">
    <location>
        <position position="103"/>
    </location>
    <ligand>
        <name>Zn(2+)</name>
        <dbReference type="ChEBI" id="CHEBI:29105"/>
        <label>1</label>
    </ligand>
</feature>
<feature type="binding site" description="via carbamate group" evidence="1">
    <location>
        <position position="103"/>
    </location>
    <ligand>
        <name>Zn(2+)</name>
        <dbReference type="ChEBI" id="CHEBI:29105"/>
        <label>2</label>
    </ligand>
</feature>
<feature type="binding site" evidence="1">
    <location>
        <position position="140"/>
    </location>
    <ligand>
        <name>substrate</name>
    </ligand>
</feature>
<feature type="binding site" evidence="1">
    <location>
        <position position="140"/>
    </location>
    <ligand>
        <name>Zn(2+)</name>
        <dbReference type="ChEBI" id="CHEBI:29105"/>
        <label>2</label>
    </ligand>
</feature>
<feature type="binding site" evidence="1">
    <location>
        <position position="178"/>
    </location>
    <ligand>
        <name>Zn(2+)</name>
        <dbReference type="ChEBI" id="CHEBI:29105"/>
        <label>2</label>
    </ligand>
</feature>
<feature type="binding site" evidence="1">
    <location>
        <position position="223"/>
    </location>
    <ligand>
        <name>substrate</name>
    </ligand>
</feature>
<feature type="binding site" evidence="1">
    <location>
        <position position="251"/>
    </location>
    <ligand>
        <name>Zn(2+)</name>
        <dbReference type="ChEBI" id="CHEBI:29105"/>
        <label>1</label>
    </ligand>
</feature>
<feature type="binding site" evidence="1">
    <location>
        <position position="255"/>
    </location>
    <ligand>
        <name>substrate</name>
    </ligand>
</feature>
<feature type="binding site" evidence="1">
    <location>
        <position position="267"/>
    </location>
    <ligand>
        <name>substrate</name>
    </ligand>
</feature>
<feature type="modified residue" description="N6-carboxylysine" evidence="1">
    <location>
        <position position="103"/>
    </location>
</feature>
<organism>
    <name type="scientific">Escherichia coli (strain 55989 / EAEC)</name>
    <dbReference type="NCBI Taxonomy" id="585055"/>
    <lineage>
        <taxon>Bacteria</taxon>
        <taxon>Pseudomonadati</taxon>
        <taxon>Pseudomonadota</taxon>
        <taxon>Gammaproteobacteria</taxon>
        <taxon>Enterobacterales</taxon>
        <taxon>Enterobacteriaceae</taxon>
        <taxon>Escherichia</taxon>
    </lineage>
</organism>
<gene>
    <name evidence="1" type="primary">pyrC</name>
    <name type="ordered locus">EC55989_1175</name>
</gene>
<name>PYRC_ECO55</name>
<sequence length="348" mass="38826">MTAPSQVLKIRRPDDWHLHLRDGDMLKTVVPYTSEIYGRAIVMPNLAPPVTTVEAAVAYRQRILDAVPAGHNFTPLMTCYLTDSLDPNELERGFNEGVFTAAKLYPANATTNSSHGVTSIDAIMPVLERMEKIGMPLLVHGEVTHADIDIFDREARFIESVMEPLRQRLTALKVVFEHITTKDAADYVRDGNERLAATITPQHLMFNRNHMLVGGVRPHLYCLPILKRNIHQQALRELVASGFNRVFLGTDSAPHARHRKESSCGCAGCFNAPTALGSYATVFEEMNALQHFEAFCSVNGPQFYGLPVNDTFIELVREEQQVAESIALTDDTLVPFLAGETVRWSVKQ</sequence>
<evidence type="ECO:0000255" key="1">
    <source>
        <dbReference type="HAMAP-Rule" id="MF_00219"/>
    </source>
</evidence>
<comment type="function">
    <text evidence="1">Catalyzes the reversible cyclization of carbamoyl aspartate to dihydroorotate.</text>
</comment>
<comment type="catalytic activity">
    <reaction evidence="1">
        <text>(S)-dihydroorotate + H2O = N-carbamoyl-L-aspartate + H(+)</text>
        <dbReference type="Rhea" id="RHEA:24296"/>
        <dbReference type="ChEBI" id="CHEBI:15377"/>
        <dbReference type="ChEBI" id="CHEBI:15378"/>
        <dbReference type="ChEBI" id="CHEBI:30864"/>
        <dbReference type="ChEBI" id="CHEBI:32814"/>
        <dbReference type="EC" id="3.5.2.3"/>
    </reaction>
</comment>
<comment type="cofactor">
    <cofactor evidence="1">
        <name>Zn(2+)</name>
        <dbReference type="ChEBI" id="CHEBI:29105"/>
    </cofactor>
    <text evidence="1">Binds 2 Zn(2+) ions per subunit.</text>
</comment>
<comment type="pathway">
    <text evidence="1">Pyrimidine metabolism; UMP biosynthesis via de novo pathway; (S)-dihydroorotate from bicarbonate: step 3/3.</text>
</comment>
<comment type="subunit">
    <text evidence="1">Homodimer.</text>
</comment>
<comment type="similarity">
    <text evidence="1">Belongs to the metallo-dependent hydrolases superfamily. DHOase family. Class II DHOase subfamily.</text>
</comment>
<reference key="1">
    <citation type="journal article" date="2009" name="PLoS Genet.">
        <title>Organised genome dynamics in the Escherichia coli species results in highly diverse adaptive paths.</title>
        <authorList>
            <person name="Touchon M."/>
            <person name="Hoede C."/>
            <person name="Tenaillon O."/>
            <person name="Barbe V."/>
            <person name="Baeriswyl S."/>
            <person name="Bidet P."/>
            <person name="Bingen E."/>
            <person name="Bonacorsi S."/>
            <person name="Bouchier C."/>
            <person name="Bouvet O."/>
            <person name="Calteau A."/>
            <person name="Chiapello H."/>
            <person name="Clermont O."/>
            <person name="Cruveiller S."/>
            <person name="Danchin A."/>
            <person name="Diard M."/>
            <person name="Dossat C."/>
            <person name="Karoui M.E."/>
            <person name="Frapy E."/>
            <person name="Garry L."/>
            <person name="Ghigo J.M."/>
            <person name="Gilles A.M."/>
            <person name="Johnson J."/>
            <person name="Le Bouguenec C."/>
            <person name="Lescat M."/>
            <person name="Mangenot S."/>
            <person name="Martinez-Jehanne V."/>
            <person name="Matic I."/>
            <person name="Nassif X."/>
            <person name="Oztas S."/>
            <person name="Petit M.A."/>
            <person name="Pichon C."/>
            <person name="Rouy Z."/>
            <person name="Ruf C.S."/>
            <person name="Schneider D."/>
            <person name="Tourret J."/>
            <person name="Vacherie B."/>
            <person name="Vallenet D."/>
            <person name="Medigue C."/>
            <person name="Rocha E.P.C."/>
            <person name="Denamur E."/>
        </authorList>
    </citation>
    <scope>NUCLEOTIDE SEQUENCE [LARGE SCALE GENOMIC DNA]</scope>
    <source>
        <strain>55989 / EAEC</strain>
    </source>
</reference>
<protein>
    <recommendedName>
        <fullName evidence="1">Dihydroorotase</fullName>
        <shortName evidence="1">DHOase</shortName>
        <ecNumber evidence="1">3.5.2.3</ecNumber>
    </recommendedName>
</protein>
<dbReference type="EC" id="3.5.2.3" evidence="1"/>
<dbReference type="EMBL" id="CU928145">
    <property type="protein sequence ID" value="CAU97034.1"/>
    <property type="molecule type" value="Genomic_DNA"/>
</dbReference>
<dbReference type="RefSeq" id="WP_000126556.1">
    <property type="nucleotide sequence ID" value="NC_011748.1"/>
</dbReference>
<dbReference type="SMR" id="B7LFZ6"/>
<dbReference type="MEROPS" id="M38.A02"/>
<dbReference type="KEGG" id="eck:EC55989_1175"/>
<dbReference type="HOGENOM" id="CLU_041558_1_0_6"/>
<dbReference type="UniPathway" id="UPA00070">
    <property type="reaction ID" value="UER00117"/>
</dbReference>
<dbReference type="Proteomes" id="UP000000746">
    <property type="component" value="Chromosome"/>
</dbReference>
<dbReference type="GO" id="GO:0005829">
    <property type="term" value="C:cytosol"/>
    <property type="evidence" value="ECO:0007669"/>
    <property type="project" value="TreeGrafter"/>
</dbReference>
<dbReference type="GO" id="GO:0004151">
    <property type="term" value="F:dihydroorotase activity"/>
    <property type="evidence" value="ECO:0007669"/>
    <property type="project" value="UniProtKB-UniRule"/>
</dbReference>
<dbReference type="GO" id="GO:0008270">
    <property type="term" value="F:zinc ion binding"/>
    <property type="evidence" value="ECO:0007669"/>
    <property type="project" value="UniProtKB-UniRule"/>
</dbReference>
<dbReference type="GO" id="GO:0006207">
    <property type="term" value="P:'de novo' pyrimidine nucleobase biosynthetic process"/>
    <property type="evidence" value="ECO:0007669"/>
    <property type="project" value="TreeGrafter"/>
</dbReference>
<dbReference type="GO" id="GO:0044205">
    <property type="term" value="P:'de novo' UMP biosynthetic process"/>
    <property type="evidence" value="ECO:0007669"/>
    <property type="project" value="UniProtKB-UniRule"/>
</dbReference>
<dbReference type="CDD" id="cd01294">
    <property type="entry name" value="DHOase"/>
    <property type="match status" value="1"/>
</dbReference>
<dbReference type="FunFam" id="3.20.20.140:FF:000006">
    <property type="entry name" value="Dihydroorotase"/>
    <property type="match status" value="1"/>
</dbReference>
<dbReference type="Gene3D" id="3.20.20.140">
    <property type="entry name" value="Metal-dependent hydrolases"/>
    <property type="match status" value="1"/>
</dbReference>
<dbReference type="HAMAP" id="MF_00219">
    <property type="entry name" value="PyrC_classII"/>
    <property type="match status" value="1"/>
</dbReference>
<dbReference type="InterPro" id="IPR006680">
    <property type="entry name" value="Amidohydro-rel"/>
</dbReference>
<dbReference type="InterPro" id="IPR004721">
    <property type="entry name" value="DHOdimr"/>
</dbReference>
<dbReference type="InterPro" id="IPR002195">
    <property type="entry name" value="Dihydroorotase_CS"/>
</dbReference>
<dbReference type="InterPro" id="IPR032466">
    <property type="entry name" value="Metal_Hydrolase"/>
</dbReference>
<dbReference type="NCBIfam" id="TIGR00856">
    <property type="entry name" value="pyrC_dimer"/>
    <property type="match status" value="1"/>
</dbReference>
<dbReference type="PANTHER" id="PTHR43137">
    <property type="entry name" value="DIHYDROOROTASE"/>
    <property type="match status" value="1"/>
</dbReference>
<dbReference type="PANTHER" id="PTHR43137:SF1">
    <property type="entry name" value="DIHYDROOROTASE"/>
    <property type="match status" value="1"/>
</dbReference>
<dbReference type="Pfam" id="PF01979">
    <property type="entry name" value="Amidohydro_1"/>
    <property type="match status" value="1"/>
</dbReference>
<dbReference type="PIRSF" id="PIRSF001237">
    <property type="entry name" value="DHOdimr"/>
    <property type="match status" value="1"/>
</dbReference>
<dbReference type="SUPFAM" id="SSF51556">
    <property type="entry name" value="Metallo-dependent hydrolases"/>
    <property type="match status" value="1"/>
</dbReference>
<dbReference type="PROSITE" id="PS00482">
    <property type="entry name" value="DIHYDROOROTASE_1"/>
    <property type="match status" value="1"/>
</dbReference>
<dbReference type="PROSITE" id="PS00483">
    <property type="entry name" value="DIHYDROOROTASE_2"/>
    <property type="match status" value="1"/>
</dbReference>
<proteinExistence type="inferred from homology"/>
<accession>B7LFZ6</accession>
<keyword id="KW-0378">Hydrolase</keyword>
<keyword id="KW-0479">Metal-binding</keyword>
<keyword id="KW-0665">Pyrimidine biosynthesis</keyword>
<keyword id="KW-1185">Reference proteome</keyword>
<keyword id="KW-0862">Zinc</keyword>